<gene>
    <name evidence="1" type="primary">pyrH</name>
    <name type="ordered locus">LSL_0561</name>
</gene>
<sequence>MSDIKYKRVLLKLSGEALAGDQGKGINPPEILKVAEEIKEVHDLGVQIAIVVGGGNMWRGEAGAEIGMERAQADYIGMLGTVMNALALQDSLESVGVPTRVQTAIEMRQVAEPYIRRKAIRHLEKGRIVIFAAGTGSPYFSTDTTAALRASELNAEVILMAKNGVDGIYNADPKVDPTAKKYTKLTHMDIINKGLRVMDTTASSLSMDNNIALVVFNMNNRGNIKKVVEGEEIGTTVEGK</sequence>
<feature type="chain" id="PRO_1000053944" description="Uridylate kinase">
    <location>
        <begin position="1"/>
        <end position="240"/>
    </location>
</feature>
<feature type="region of interest" description="Involved in allosteric activation by GTP" evidence="1">
    <location>
        <begin position="20"/>
        <end position="25"/>
    </location>
</feature>
<feature type="binding site" evidence="1">
    <location>
        <begin position="12"/>
        <end position="15"/>
    </location>
    <ligand>
        <name>ATP</name>
        <dbReference type="ChEBI" id="CHEBI:30616"/>
    </ligand>
</feature>
<feature type="binding site" evidence="1">
    <location>
        <position position="54"/>
    </location>
    <ligand>
        <name>UMP</name>
        <dbReference type="ChEBI" id="CHEBI:57865"/>
    </ligand>
</feature>
<feature type="binding site" evidence="1">
    <location>
        <position position="55"/>
    </location>
    <ligand>
        <name>ATP</name>
        <dbReference type="ChEBI" id="CHEBI:30616"/>
    </ligand>
</feature>
<feature type="binding site" evidence="1">
    <location>
        <position position="59"/>
    </location>
    <ligand>
        <name>ATP</name>
        <dbReference type="ChEBI" id="CHEBI:30616"/>
    </ligand>
</feature>
<feature type="binding site" evidence="1">
    <location>
        <position position="74"/>
    </location>
    <ligand>
        <name>UMP</name>
        <dbReference type="ChEBI" id="CHEBI:57865"/>
    </ligand>
</feature>
<feature type="binding site" evidence="1">
    <location>
        <begin position="135"/>
        <end position="142"/>
    </location>
    <ligand>
        <name>UMP</name>
        <dbReference type="ChEBI" id="CHEBI:57865"/>
    </ligand>
</feature>
<feature type="binding site" evidence="1">
    <location>
        <position position="163"/>
    </location>
    <ligand>
        <name>ATP</name>
        <dbReference type="ChEBI" id="CHEBI:30616"/>
    </ligand>
</feature>
<feature type="binding site" evidence="1">
    <location>
        <position position="169"/>
    </location>
    <ligand>
        <name>ATP</name>
        <dbReference type="ChEBI" id="CHEBI:30616"/>
    </ligand>
</feature>
<feature type="binding site" evidence="1">
    <location>
        <position position="172"/>
    </location>
    <ligand>
        <name>ATP</name>
        <dbReference type="ChEBI" id="CHEBI:30616"/>
    </ligand>
</feature>
<reference key="1">
    <citation type="journal article" date="2006" name="Proc. Natl. Acad. Sci. U.S.A.">
        <title>Multireplicon genome architecture of Lactobacillus salivarius.</title>
        <authorList>
            <person name="Claesson M.J."/>
            <person name="Li Y."/>
            <person name="Leahy S."/>
            <person name="Canchaya C."/>
            <person name="van Pijkeren J.P."/>
            <person name="Cerdeno-Tarraga A.M."/>
            <person name="Parkhill J."/>
            <person name="Flynn S."/>
            <person name="O'Sullivan G.C."/>
            <person name="Collins J.K."/>
            <person name="Higgins D."/>
            <person name="Shanahan F."/>
            <person name="Fitzgerald G.F."/>
            <person name="van Sinderen D."/>
            <person name="O'Toole P.W."/>
        </authorList>
    </citation>
    <scope>NUCLEOTIDE SEQUENCE [LARGE SCALE GENOMIC DNA]</scope>
    <source>
        <strain>UCC118</strain>
    </source>
</reference>
<proteinExistence type="inferred from homology"/>
<name>PYRH_LIGS1</name>
<keyword id="KW-0021">Allosteric enzyme</keyword>
<keyword id="KW-0067">ATP-binding</keyword>
<keyword id="KW-0963">Cytoplasm</keyword>
<keyword id="KW-0418">Kinase</keyword>
<keyword id="KW-0547">Nucleotide-binding</keyword>
<keyword id="KW-0665">Pyrimidine biosynthesis</keyword>
<keyword id="KW-1185">Reference proteome</keyword>
<keyword id="KW-0808">Transferase</keyword>
<accession>Q1WUG5</accession>
<evidence type="ECO:0000255" key="1">
    <source>
        <dbReference type="HAMAP-Rule" id="MF_01220"/>
    </source>
</evidence>
<dbReference type="EC" id="2.7.4.22" evidence="1"/>
<dbReference type="EMBL" id="CP000233">
    <property type="protein sequence ID" value="ABD99370.1"/>
    <property type="molecule type" value="Genomic_DNA"/>
</dbReference>
<dbReference type="RefSeq" id="WP_003703168.1">
    <property type="nucleotide sequence ID" value="NC_007929.1"/>
</dbReference>
<dbReference type="RefSeq" id="YP_535453.1">
    <property type="nucleotide sequence ID" value="NC_007929.1"/>
</dbReference>
<dbReference type="SMR" id="Q1WUG5"/>
<dbReference type="STRING" id="362948.LSL_0561"/>
<dbReference type="GeneID" id="89465347"/>
<dbReference type="KEGG" id="lsl:LSL_0561"/>
<dbReference type="PATRIC" id="fig|362948.14.peg.640"/>
<dbReference type="HOGENOM" id="CLU_033861_0_0_9"/>
<dbReference type="OrthoDB" id="9807458at2"/>
<dbReference type="UniPathway" id="UPA00159">
    <property type="reaction ID" value="UER00275"/>
</dbReference>
<dbReference type="Proteomes" id="UP000006559">
    <property type="component" value="Chromosome"/>
</dbReference>
<dbReference type="GO" id="GO:0005737">
    <property type="term" value="C:cytoplasm"/>
    <property type="evidence" value="ECO:0007669"/>
    <property type="project" value="UniProtKB-SubCell"/>
</dbReference>
<dbReference type="GO" id="GO:0005524">
    <property type="term" value="F:ATP binding"/>
    <property type="evidence" value="ECO:0007669"/>
    <property type="project" value="UniProtKB-KW"/>
</dbReference>
<dbReference type="GO" id="GO:0033862">
    <property type="term" value="F:UMP kinase activity"/>
    <property type="evidence" value="ECO:0007669"/>
    <property type="project" value="UniProtKB-EC"/>
</dbReference>
<dbReference type="GO" id="GO:0044210">
    <property type="term" value="P:'de novo' CTP biosynthetic process"/>
    <property type="evidence" value="ECO:0007669"/>
    <property type="project" value="UniProtKB-UniRule"/>
</dbReference>
<dbReference type="GO" id="GO:0006225">
    <property type="term" value="P:UDP biosynthetic process"/>
    <property type="evidence" value="ECO:0007669"/>
    <property type="project" value="TreeGrafter"/>
</dbReference>
<dbReference type="CDD" id="cd04254">
    <property type="entry name" value="AAK_UMPK-PyrH-Ec"/>
    <property type="match status" value="1"/>
</dbReference>
<dbReference type="FunFam" id="3.40.1160.10:FF:000001">
    <property type="entry name" value="Uridylate kinase"/>
    <property type="match status" value="1"/>
</dbReference>
<dbReference type="Gene3D" id="3.40.1160.10">
    <property type="entry name" value="Acetylglutamate kinase-like"/>
    <property type="match status" value="1"/>
</dbReference>
<dbReference type="HAMAP" id="MF_01220_B">
    <property type="entry name" value="PyrH_B"/>
    <property type="match status" value="1"/>
</dbReference>
<dbReference type="InterPro" id="IPR036393">
    <property type="entry name" value="AceGlu_kinase-like_sf"/>
</dbReference>
<dbReference type="InterPro" id="IPR001048">
    <property type="entry name" value="Asp/Glu/Uridylate_kinase"/>
</dbReference>
<dbReference type="InterPro" id="IPR011817">
    <property type="entry name" value="Uridylate_kinase"/>
</dbReference>
<dbReference type="InterPro" id="IPR015963">
    <property type="entry name" value="Uridylate_kinase_bac"/>
</dbReference>
<dbReference type="NCBIfam" id="TIGR02075">
    <property type="entry name" value="pyrH_bact"/>
    <property type="match status" value="1"/>
</dbReference>
<dbReference type="PANTHER" id="PTHR42833">
    <property type="entry name" value="URIDYLATE KINASE"/>
    <property type="match status" value="1"/>
</dbReference>
<dbReference type="PANTHER" id="PTHR42833:SF4">
    <property type="entry name" value="URIDYLATE KINASE PUMPKIN, CHLOROPLASTIC"/>
    <property type="match status" value="1"/>
</dbReference>
<dbReference type="Pfam" id="PF00696">
    <property type="entry name" value="AA_kinase"/>
    <property type="match status" value="1"/>
</dbReference>
<dbReference type="PIRSF" id="PIRSF005650">
    <property type="entry name" value="Uridylate_kin"/>
    <property type="match status" value="1"/>
</dbReference>
<dbReference type="SUPFAM" id="SSF53633">
    <property type="entry name" value="Carbamate kinase-like"/>
    <property type="match status" value="1"/>
</dbReference>
<comment type="function">
    <text evidence="1">Catalyzes the reversible phosphorylation of UMP to UDP.</text>
</comment>
<comment type="catalytic activity">
    <reaction evidence="1">
        <text>UMP + ATP = UDP + ADP</text>
        <dbReference type="Rhea" id="RHEA:24400"/>
        <dbReference type="ChEBI" id="CHEBI:30616"/>
        <dbReference type="ChEBI" id="CHEBI:57865"/>
        <dbReference type="ChEBI" id="CHEBI:58223"/>
        <dbReference type="ChEBI" id="CHEBI:456216"/>
        <dbReference type="EC" id="2.7.4.22"/>
    </reaction>
</comment>
<comment type="activity regulation">
    <text evidence="1">Allosterically activated by GTP. Inhibited by UTP.</text>
</comment>
<comment type="pathway">
    <text evidence="1">Pyrimidine metabolism; CTP biosynthesis via de novo pathway; UDP from UMP (UMPK route): step 1/1.</text>
</comment>
<comment type="subunit">
    <text evidence="1">Homohexamer.</text>
</comment>
<comment type="subcellular location">
    <subcellularLocation>
        <location evidence="1">Cytoplasm</location>
    </subcellularLocation>
</comment>
<comment type="similarity">
    <text evidence="1">Belongs to the UMP kinase family.</text>
</comment>
<protein>
    <recommendedName>
        <fullName evidence="1">Uridylate kinase</fullName>
        <shortName evidence="1">UK</shortName>
        <ecNumber evidence="1">2.7.4.22</ecNumber>
    </recommendedName>
    <alternativeName>
        <fullName evidence="1">Uridine monophosphate kinase</fullName>
        <shortName evidence="1">UMP kinase</shortName>
        <shortName evidence="1">UMPK</shortName>
    </alternativeName>
</protein>
<organism>
    <name type="scientific">Ligilactobacillus salivarius (strain UCC118)</name>
    <name type="common">Lactobacillus salivarius</name>
    <dbReference type="NCBI Taxonomy" id="362948"/>
    <lineage>
        <taxon>Bacteria</taxon>
        <taxon>Bacillati</taxon>
        <taxon>Bacillota</taxon>
        <taxon>Bacilli</taxon>
        <taxon>Lactobacillales</taxon>
        <taxon>Lactobacillaceae</taxon>
        <taxon>Ligilactobacillus</taxon>
    </lineage>
</organism>